<accession>Q9RGZ0</accession>
<accession>D3FXH7</accession>
<proteinExistence type="evidence at protein level"/>
<reference key="1">
    <citation type="journal article" date="2001" name="FEBS Lett.">
        <title>Mrp-dependent Na(+)/H(+) antiporters of Bacillus exhibit characteristics that are unanticipated for completely secondary active transporters.</title>
        <authorList>
            <person name="Ito M."/>
            <person name="Guffanti A.A."/>
            <person name="Krulwich T.A."/>
        </authorList>
    </citation>
    <scope>NUCLEOTIDE SEQUENCE [GENOMIC DNA]</scope>
</reference>
<reference key="2">
    <citation type="journal article" date="2011" name="Environ. Microbiol.">
        <title>Genome of alkaliphilic Bacillus pseudofirmus OF4 reveals adaptations that support the ability to grow in an external pH range from 7.5 to 11.4.</title>
        <authorList>
            <person name="Janto B."/>
            <person name="Ahmed A."/>
            <person name="Ito M."/>
            <person name="Liu J."/>
            <person name="Hicks D.B."/>
            <person name="Pagni S."/>
            <person name="Fackelmayer O.J."/>
            <person name="Smith T.A."/>
            <person name="Earl J."/>
            <person name="Elbourne L.D."/>
            <person name="Hassan K."/>
            <person name="Paulsen I.T."/>
            <person name="Kolsto A.B."/>
            <person name="Tourasse N.J."/>
            <person name="Ehrlich G.D."/>
            <person name="Boissy R."/>
            <person name="Ivey D.M."/>
            <person name="Li G."/>
            <person name="Xue Y."/>
            <person name="Ma Y."/>
            <person name="Hu F.Z."/>
            <person name="Krulwich T.A."/>
        </authorList>
    </citation>
    <scope>NUCLEOTIDE SEQUENCE [LARGE SCALE GENOMIC DNA]</scope>
    <source>
        <strain>ATCC BAA-2126 / JCM 17055 / OF4</strain>
    </source>
</reference>
<reference key="3">
    <citation type="journal article" date="2007" name="J. Bacteriol.">
        <title>Catalytic properties of Staphylococcus aureus and Bacillus members of the secondary cation/proton antiporter-3 (Mrp) family are revealed by an optimized assay in an Escherichia coli host.</title>
        <authorList>
            <person name="Swartz T.H."/>
            <person name="Ito M."/>
            <person name="Ohira T."/>
            <person name="Natsui S."/>
            <person name="Hicks D.B."/>
            <person name="Krulwich T.A."/>
        </authorList>
    </citation>
    <scope>CHARACTERIZATION</scope>
    <scope>PROBABLE FUNCTION IN ELECTROGENIC ANTIPORTER ACTIVITY</scope>
</reference>
<keyword id="KW-0002">3D-structure</keyword>
<keyword id="KW-0050">Antiport</keyword>
<keyword id="KW-1003">Cell membrane</keyword>
<keyword id="KW-0375">Hydrogen ion transport</keyword>
<keyword id="KW-0406">Ion transport</keyword>
<keyword id="KW-0472">Membrane</keyword>
<keyword id="KW-1185">Reference proteome</keyword>
<keyword id="KW-0915">Sodium</keyword>
<keyword id="KW-0739">Sodium transport</keyword>
<keyword id="KW-0812">Transmembrane</keyword>
<keyword id="KW-1133">Transmembrane helix</keyword>
<keyword id="KW-0813">Transport</keyword>
<evidence type="ECO:0000250" key="1"/>
<evidence type="ECO:0000255" key="2"/>
<evidence type="ECO:0000305" key="3"/>
<evidence type="ECO:0007829" key="4">
    <source>
        <dbReference type="PDB" id="7QRU"/>
    </source>
</evidence>
<protein>
    <recommendedName>
        <fullName>Na(+)/H(+) antiporter subunit F</fullName>
    </recommendedName>
    <alternativeName>
        <fullName>Mrp complex subunit F</fullName>
    </alternativeName>
    <alternativeName>
        <fullName>Multiple resistance and pH homeostasis protein F</fullName>
    </alternativeName>
</protein>
<name>MRPF_ALKPO</name>
<dbReference type="EMBL" id="AF097740">
    <property type="protein sequence ID" value="AAF21817.1"/>
    <property type="molecule type" value="Genomic_DNA"/>
</dbReference>
<dbReference type="EMBL" id="CP001878">
    <property type="protein sequence ID" value="ADC50688.1"/>
    <property type="molecule type" value="Genomic_DNA"/>
</dbReference>
<dbReference type="RefSeq" id="WP_012958051.1">
    <property type="nucleotide sequence ID" value="NC_013791.2"/>
</dbReference>
<dbReference type="PDB" id="7QRU">
    <property type="method" value="EM"/>
    <property type="resolution" value="2.24 A"/>
    <property type="chains" value="F=1-91"/>
</dbReference>
<dbReference type="PDBsum" id="7QRU"/>
<dbReference type="SMR" id="Q9RGZ0"/>
<dbReference type="STRING" id="398511.BpOF4_13185"/>
<dbReference type="KEGG" id="bpf:BpOF4_13185"/>
<dbReference type="eggNOG" id="COG2212">
    <property type="taxonomic scope" value="Bacteria"/>
</dbReference>
<dbReference type="HOGENOM" id="CLU_125825_1_3_9"/>
<dbReference type="Proteomes" id="UP000001544">
    <property type="component" value="Chromosome"/>
</dbReference>
<dbReference type="GO" id="GO:0005886">
    <property type="term" value="C:plasma membrane"/>
    <property type="evidence" value="ECO:0007669"/>
    <property type="project" value="UniProtKB-SubCell"/>
</dbReference>
<dbReference type="GO" id="GO:0015385">
    <property type="term" value="F:sodium:proton antiporter activity"/>
    <property type="evidence" value="ECO:0007669"/>
    <property type="project" value="TreeGrafter"/>
</dbReference>
<dbReference type="InterPro" id="IPR007208">
    <property type="entry name" value="MrpF/PhaF-like"/>
</dbReference>
<dbReference type="NCBIfam" id="NF009248">
    <property type="entry name" value="PRK12600.1"/>
    <property type="match status" value="1"/>
</dbReference>
<dbReference type="PANTHER" id="PTHR34702">
    <property type="entry name" value="NA(+)/H(+) ANTIPORTER SUBUNIT F1"/>
    <property type="match status" value="1"/>
</dbReference>
<dbReference type="PANTHER" id="PTHR34702:SF1">
    <property type="entry name" value="NA(+)_H(+) ANTIPORTER SUBUNIT F"/>
    <property type="match status" value="1"/>
</dbReference>
<dbReference type="Pfam" id="PF04066">
    <property type="entry name" value="MrpF_PhaF"/>
    <property type="match status" value="1"/>
</dbReference>
<dbReference type="PIRSF" id="PIRSF028784">
    <property type="entry name" value="MrpF"/>
    <property type="match status" value="1"/>
</dbReference>
<feature type="chain" id="PRO_0000087743" description="Na(+)/H(+) antiporter subunit F">
    <location>
        <begin position="1"/>
        <end position="91"/>
    </location>
</feature>
<feature type="transmembrane region" description="Helical" evidence="2">
    <location>
        <begin position="5"/>
        <end position="27"/>
    </location>
</feature>
<feature type="transmembrane region" description="Helical" evidence="2">
    <location>
        <begin position="34"/>
        <end position="53"/>
    </location>
</feature>
<feature type="transmembrane region" description="Helical" evidence="2">
    <location>
        <begin position="63"/>
        <end position="82"/>
    </location>
</feature>
<feature type="helix" evidence="4">
    <location>
        <begin position="2"/>
        <end position="26"/>
    </location>
</feature>
<feature type="helix" evidence="4">
    <location>
        <begin position="30"/>
        <end position="54"/>
    </location>
</feature>
<feature type="helix" evidence="4">
    <location>
        <begin position="61"/>
        <end position="84"/>
    </location>
</feature>
<organism>
    <name type="scientific">Alkalihalophilus pseudofirmus (strain ATCC BAA-2126 / JCM 17055 / OF4)</name>
    <name type="common">Bacillus pseudofirmus</name>
    <dbReference type="NCBI Taxonomy" id="398511"/>
    <lineage>
        <taxon>Bacteria</taxon>
        <taxon>Bacillati</taxon>
        <taxon>Bacillota</taxon>
        <taxon>Bacilli</taxon>
        <taxon>Bacillales</taxon>
        <taxon>Bacillaceae</taxon>
        <taxon>Alkalihalophilus</taxon>
    </lineage>
</organism>
<sequence length="91" mass="10019">MFQSILMIVLVVMSISLFVCFIRTLIGPTMSDRIVALDTFGINLIGFIGVIMMLQETLAYSEVVLVISILAFIGSIALSKFIERGVVFDRG</sequence>
<comment type="function">
    <text>Mnh complex is a Na(+)Li(+)/H(+) antiporter involved in Na(+) and/or Li(+) excretion and Na(+) resistance. Na(+)/H(+) antiport consumes a transmembrane electrical potential, and is thus inferred to be electrogenic. Does not transport K(+), Ca(2+) or Mg(2+).</text>
</comment>
<comment type="subunit">
    <text evidence="1">Forms a heterooligomeric complex that consists of seven subunits: MrpA, MrpB, MrpC, MrpD, MrpE, MrpF and MrpG.</text>
</comment>
<comment type="subcellular location">
    <subcellularLocation>
        <location evidence="3">Cell membrane</location>
        <topology evidence="3">Multi-pass membrane protein</topology>
    </subcellularLocation>
</comment>
<comment type="miscellaneous">
    <text>Mrp-dependent antiport apparently occurs by a secondary, proton motive force-dependent mechanism, but the similarity of several Mrp proteins to membrane-embedded subunits of energy-coupled NADH dehydrogenase complexes raises the possibility that there is a capacity for electron transport that could provide a primary energy coupling option for Mrp functions.</text>
</comment>
<comment type="similarity">
    <text evidence="3">Belongs to the CPA3 antiporters (TC 2.A.63) subunit F family.</text>
</comment>
<gene>
    <name type="primary">mrpF</name>
    <name type="ordered locus">BpOF4_13185</name>
</gene>